<organism>
    <name type="scientific">Sus scrofa</name>
    <name type="common">Pig</name>
    <dbReference type="NCBI Taxonomy" id="9823"/>
    <lineage>
        <taxon>Eukaryota</taxon>
        <taxon>Metazoa</taxon>
        <taxon>Chordata</taxon>
        <taxon>Craniata</taxon>
        <taxon>Vertebrata</taxon>
        <taxon>Euteleostomi</taxon>
        <taxon>Mammalia</taxon>
        <taxon>Eutheria</taxon>
        <taxon>Laurasiatheria</taxon>
        <taxon>Artiodactyla</taxon>
        <taxon>Suina</taxon>
        <taxon>Suidae</taxon>
        <taxon>Sus</taxon>
    </lineage>
</organism>
<comment type="function">
    <text evidence="1">Vitronectin is a cell adhesion and spreading factor found in serum and tissues. Vitronectin interact with glycosaminoglycans and proteoglycans. Is recognized by certain members of the integrin family and serves as a cell-to-substrate adhesion molecule. Inhibitor of the membrane-damaging effect of the terminal cytolytic complement pathway (By similarity).</text>
</comment>
<comment type="subunit">
    <text evidence="1">Monomer. Interacts with SERPINE1/PAI1 and C1QBP (By similarity).</text>
</comment>
<comment type="subcellular location">
    <subcellularLocation>
        <location>Secreted</location>
        <location>Extracellular space</location>
    </subcellularLocation>
</comment>
<comment type="tissue specificity">
    <text>Plasma.</text>
</comment>
<comment type="domain">
    <text evidence="1">The SMB domain mediates interaction with SERPINE1/PAI1.</text>
</comment>
<comment type="PTM">
    <text evidence="2">Sulfated on tyrosine residues.</text>
</comment>
<comment type="PTM">
    <text evidence="1">N- and O-glycosylated.</text>
</comment>
<comment type="PTM">
    <text>It has been suggested that the active SMB domain may be permitted considerable disulfide bond heterogeneity or variability, thus two alternate disulfide patterns based on 3D structures are described with 1 disulfide bond conserved in both.</text>
</comment>
<accession>P48819</accession>
<feature type="signal peptide" evidence="6">
    <location>
        <begin position="1"/>
        <end position="19"/>
    </location>
</feature>
<feature type="chain" id="PRO_0000036399" description="Vitronectin">
    <location>
        <begin position="20"/>
        <end position="459"/>
    </location>
</feature>
<feature type="domain" description="SMB" evidence="4">
    <location>
        <begin position="20"/>
        <end position="63"/>
    </location>
</feature>
<feature type="repeat" description="Hemopexin 1">
    <location>
        <begin position="135"/>
        <end position="179"/>
    </location>
</feature>
<feature type="repeat" description="Hemopexin 2">
    <location>
        <begin position="180"/>
        <end position="227"/>
    </location>
</feature>
<feature type="repeat" description="Hemopexin 3">
    <location>
        <begin position="228"/>
        <end position="285"/>
    </location>
</feature>
<feature type="repeat" description="Hemopexin 4">
    <location>
        <begin position="400"/>
        <end position="453"/>
    </location>
</feature>
<feature type="region of interest" description="Disordered" evidence="5">
    <location>
        <begin position="338"/>
        <end position="380"/>
    </location>
</feature>
<feature type="short sequence motif" description="Cell attachment site" evidence="3">
    <location>
        <begin position="64"/>
        <end position="66"/>
    </location>
</feature>
<feature type="compositionally biased region" description="Basic residues" evidence="5">
    <location>
        <begin position="347"/>
        <end position="378"/>
    </location>
</feature>
<feature type="modified residue" description="Sulfotyrosine" evidence="3">
    <location>
        <position position="75"/>
    </location>
</feature>
<feature type="modified residue" description="Sulfotyrosine" evidence="3">
    <location>
        <position position="78"/>
    </location>
</feature>
<feature type="modified residue" description="Sulfotyrosine" evidence="3">
    <location>
        <position position="80"/>
    </location>
</feature>
<feature type="modified residue" description="Phosphoserine" evidence="2">
    <location>
        <position position="289"/>
    </location>
</feature>
<feature type="modified residue" description="Phosphoserine" evidence="2">
    <location>
        <position position="378"/>
    </location>
</feature>
<feature type="modified residue" description="Sulfotyrosine" evidence="3">
    <location>
        <position position="398"/>
    </location>
</feature>
<feature type="modified residue" description="Sulfotyrosine" evidence="3">
    <location>
        <position position="401"/>
    </location>
</feature>
<feature type="glycosylation site" description="N-linked (GlcNAc...) asparagine" evidence="3">
    <location>
        <position position="87"/>
    </location>
</feature>
<feature type="glycosylation site" description="N-linked (GlcNAc...) asparagine" evidence="3">
    <location>
        <position position="146"/>
    </location>
</feature>
<feature type="disulfide bond" description="Alternate" evidence="4">
    <location>
        <begin position="24"/>
        <end position="40"/>
    </location>
</feature>
<feature type="disulfide bond" description="Alternate" evidence="4">
    <location>
        <begin position="24"/>
        <end position="28"/>
    </location>
</feature>
<feature type="disulfide bond" description="Alternate" evidence="4">
    <location>
        <begin position="28"/>
        <end position="58"/>
    </location>
</feature>
<feature type="disulfide bond" description="Alternate" evidence="4">
    <location>
        <begin position="38"/>
        <end position="51"/>
    </location>
</feature>
<feature type="disulfide bond" description="Alternate" evidence="4">
    <location>
        <begin position="38"/>
        <end position="40"/>
    </location>
</feature>
<feature type="disulfide bond" evidence="4">
    <location>
        <begin position="44"/>
        <end position="50"/>
    </location>
</feature>
<feature type="disulfide bond" description="Alternate" evidence="4">
    <location>
        <begin position="51"/>
        <end position="58"/>
    </location>
</feature>
<feature type="sequence conflict" description="In Ref. 2; AA sequence." evidence="7" ref="2">
    <original>C</original>
    <variation>L</variation>
    <location>
        <position position="44"/>
    </location>
</feature>
<proteinExistence type="evidence at protein level"/>
<sequence>MAPLRPLLMLALLAWVALADQESCKGRCTDGFIAERKCQCDELCSYYQSCCTDYVAECKPQVTRGDVFLQPDDEYRAYDYHEETRHNTSVQEEQRIPVLLAKTEETPVLKPEEEAPPPGPQTDDLGVPEEELCSGKPFDAFTNLKNGSVFAFRGLYCYELDEKAVRPGYPKLIQDVWGIKGPIDAAFTRINCQGKTYLFKGSQYWRFDDGVLDPNYPREISEGFKGIPDDVDAALALPAHSYSGRERVYFFKGKQYWEYVFQQQPSREECEGSSPSDVFAHFALMQRDSWEDIFRLLFWSHSFGGAIEPRVISQDWLGLPEQVDAAMAGQIYISGSALKPSQPKMTKSARRSGKRYRSRRGRGRGRGHSRSQKSHRQSRSTWLPWFSSEETGPGGYNYDDYKMDWLVPATCEPIQSVYFFSGEEYYRVNLRTQRVDTVTPPYPRSIAQYWLGCPVPDQK</sequence>
<keyword id="KW-0130">Cell adhesion</keyword>
<keyword id="KW-0903">Direct protein sequencing</keyword>
<keyword id="KW-1015">Disulfide bond</keyword>
<keyword id="KW-0325">Glycoprotein</keyword>
<keyword id="KW-0358">Heparin-binding</keyword>
<keyword id="KW-0597">Phosphoprotein</keyword>
<keyword id="KW-1185">Reference proteome</keyword>
<keyword id="KW-0677">Repeat</keyword>
<keyword id="KW-0964">Secreted</keyword>
<keyword id="KW-0732">Signal</keyword>
<keyword id="KW-0765">Sulfation</keyword>
<protein>
    <recommendedName>
        <fullName>Vitronectin</fullName>
        <shortName>VN</shortName>
    </recommendedName>
    <alternativeName>
        <fullName>S-protein</fullName>
    </alternativeName>
    <alternativeName>
        <fullName>Serum-spreading factor</fullName>
    </alternativeName>
</protein>
<gene>
    <name type="primary">VTN</name>
</gene>
<dbReference type="EMBL" id="D63145">
    <property type="protein sequence ID" value="BAA09630.1"/>
    <property type="molecule type" value="mRNA"/>
</dbReference>
<dbReference type="PIR" id="JC5139">
    <property type="entry name" value="JC5139"/>
</dbReference>
<dbReference type="RefSeq" id="NP_999269.1">
    <property type="nucleotide sequence ID" value="NM_214104.1"/>
</dbReference>
<dbReference type="SMR" id="P48819"/>
<dbReference type="FunCoup" id="P48819">
    <property type="interactions" value="246"/>
</dbReference>
<dbReference type="STRING" id="9823.ENSSSCP00000020670"/>
<dbReference type="GlyConnect" id="624">
    <property type="glycosylation" value="18 N-Linked glycans"/>
</dbReference>
<dbReference type="GlyCosmos" id="P48819">
    <property type="glycosylation" value="2 sites, 28 glycans"/>
</dbReference>
<dbReference type="GlyGen" id="P48819">
    <property type="glycosylation" value="3 sites, 28 N-linked glycans (1 site)"/>
</dbReference>
<dbReference type="PaxDb" id="9823-ENSSSCP00000025875"/>
<dbReference type="PeptideAtlas" id="P48819"/>
<dbReference type="Ensembl" id="ENSSSCT00025081975.1">
    <property type="protein sequence ID" value="ENSSSCP00025035576.1"/>
    <property type="gene ID" value="ENSSSCG00025059518.1"/>
</dbReference>
<dbReference type="Ensembl" id="ENSSSCT00035086772.1">
    <property type="protein sequence ID" value="ENSSSCP00035036171.1"/>
    <property type="gene ID" value="ENSSSCG00035064407.1"/>
</dbReference>
<dbReference type="Ensembl" id="ENSSSCT00055001958.1">
    <property type="protein sequence ID" value="ENSSSCP00055001475.1"/>
    <property type="gene ID" value="ENSSSCG00055001101.1"/>
</dbReference>
<dbReference type="Ensembl" id="ENSSSCT00055001978.1">
    <property type="protein sequence ID" value="ENSSSCP00055001488.1"/>
    <property type="gene ID" value="ENSSSCG00055001101.1"/>
</dbReference>
<dbReference type="Ensembl" id="ENSSSCT00065106107.1">
    <property type="protein sequence ID" value="ENSSSCP00065047173.1"/>
    <property type="gene ID" value="ENSSSCG00065076697.1"/>
</dbReference>
<dbReference type="Ensembl" id="ENSSSCT00065106142.1">
    <property type="protein sequence ID" value="ENSSSCP00065047196.1"/>
    <property type="gene ID" value="ENSSSCG00065076697.1"/>
</dbReference>
<dbReference type="GeneID" id="397192"/>
<dbReference type="KEGG" id="ssc:397192"/>
<dbReference type="CTD" id="7448"/>
<dbReference type="eggNOG" id="KOG1565">
    <property type="taxonomic scope" value="Eukaryota"/>
</dbReference>
<dbReference type="InParanoid" id="P48819"/>
<dbReference type="OrthoDB" id="9898692at2759"/>
<dbReference type="Reactome" id="R-SSC-2129379">
    <property type="pathway name" value="Molecules associated with elastic fibres"/>
</dbReference>
<dbReference type="Reactome" id="R-SSC-216083">
    <property type="pathway name" value="Integrin cell surface interactions"/>
</dbReference>
<dbReference type="Reactome" id="R-SSC-3000170">
    <property type="pathway name" value="Syndecan interactions"/>
</dbReference>
<dbReference type="Reactome" id="R-SSC-3000178">
    <property type="pathway name" value="ECM proteoglycans"/>
</dbReference>
<dbReference type="Reactome" id="R-SSC-977606">
    <property type="pathway name" value="Regulation of Complement cascade"/>
</dbReference>
<dbReference type="Proteomes" id="UP000008227">
    <property type="component" value="Unplaced"/>
</dbReference>
<dbReference type="Proteomes" id="UP000314985">
    <property type="component" value="Unplaced"/>
</dbReference>
<dbReference type="Proteomes" id="UP000694570">
    <property type="component" value="Unplaced"/>
</dbReference>
<dbReference type="Proteomes" id="UP000694571">
    <property type="component" value="Unplaced"/>
</dbReference>
<dbReference type="Proteomes" id="UP000694720">
    <property type="component" value="Unplaced"/>
</dbReference>
<dbReference type="Proteomes" id="UP000694722">
    <property type="component" value="Unplaced"/>
</dbReference>
<dbReference type="Proteomes" id="UP000694723">
    <property type="component" value="Unplaced"/>
</dbReference>
<dbReference type="Proteomes" id="UP000694724">
    <property type="component" value="Unplaced"/>
</dbReference>
<dbReference type="Proteomes" id="UP000694725">
    <property type="component" value="Unplaced"/>
</dbReference>
<dbReference type="Proteomes" id="UP000694726">
    <property type="component" value="Unplaced"/>
</dbReference>
<dbReference type="Proteomes" id="UP000694727">
    <property type="component" value="Unplaced"/>
</dbReference>
<dbReference type="Proteomes" id="UP000694728">
    <property type="component" value="Unplaced"/>
</dbReference>
<dbReference type="GO" id="GO:0062023">
    <property type="term" value="C:collagen-containing extracellular matrix"/>
    <property type="evidence" value="ECO:0000318"/>
    <property type="project" value="GO_Central"/>
</dbReference>
<dbReference type="GO" id="GO:0005615">
    <property type="term" value="C:extracellular space"/>
    <property type="evidence" value="ECO:0000318"/>
    <property type="project" value="GO_Central"/>
</dbReference>
<dbReference type="GO" id="GO:0050840">
    <property type="term" value="F:extracellular matrix binding"/>
    <property type="evidence" value="ECO:0000318"/>
    <property type="project" value="GO_Central"/>
</dbReference>
<dbReference type="GO" id="GO:0008201">
    <property type="term" value="F:heparin binding"/>
    <property type="evidence" value="ECO:0007669"/>
    <property type="project" value="UniProtKB-KW"/>
</dbReference>
<dbReference type="GO" id="GO:0005178">
    <property type="term" value="F:integrin binding"/>
    <property type="evidence" value="ECO:0000318"/>
    <property type="project" value="GO_Central"/>
</dbReference>
<dbReference type="GO" id="GO:0030247">
    <property type="term" value="F:polysaccharide binding"/>
    <property type="evidence" value="ECO:0007669"/>
    <property type="project" value="InterPro"/>
</dbReference>
<dbReference type="GO" id="GO:0005044">
    <property type="term" value="F:scavenger receptor activity"/>
    <property type="evidence" value="ECO:0007669"/>
    <property type="project" value="InterPro"/>
</dbReference>
<dbReference type="GO" id="GO:0033627">
    <property type="term" value="P:cell adhesion mediated by integrin"/>
    <property type="evidence" value="ECO:0000318"/>
    <property type="project" value="GO_Central"/>
</dbReference>
<dbReference type="GO" id="GO:0007160">
    <property type="term" value="P:cell-matrix adhesion"/>
    <property type="evidence" value="ECO:0000318"/>
    <property type="project" value="GO_Central"/>
</dbReference>
<dbReference type="GO" id="GO:0006955">
    <property type="term" value="P:immune response"/>
    <property type="evidence" value="ECO:0007669"/>
    <property type="project" value="InterPro"/>
</dbReference>
<dbReference type="CDD" id="cd00094">
    <property type="entry name" value="HX"/>
    <property type="match status" value="1"/>
</dbReference>
<dbReference type="FunFam" id="4.10.410.20:FF:000002">
    <property type="entry name" value="Ectonucleotide pyrophosphatase/phosphodiesterase family member 2"/>
    <property type="match status" value="1"/>
</dbReference>
<dbReference type="Gene3D" id="4.10.410.20">
    <property type="match status" value="1"/>
</dbReference>
<dbReference type="Gene3D" id="2.110.10.10">
    <property type="entry name" value="Hemopexin-like domain"/>
    <property type="match status" value="2"/>
</dbReference>
<dbReference type="InterPro" id="IPR051298">
    <property type="entry name" value="Heme_transport/Cell_adhesion"/>
</dbReference>
<dbReference type="InterPro" id="IPR000585">
    <property type="entry name" value="Hemopexin-like_dom"/>
</dbReference>
<dbReference type="InterPro" id="IPR036375">
    <property type="entry name" value="Hemopexin-like_dom_sf"/>
</dbReference>
<dbReference type="InterPro" id="IPR018487">
    <property type="entry name" value="Hemopexin-like_repeat"/>
</dbReference>
<dbReference type="InterPro" id="IPR018486">
    <property type="entry name" value="Hemopexin_CS"/>
</dbReference>
<dbReference type="InterPro" id="IPR020436">
    <property type="entry name" value="SMB_chordata"/>
</dbReference>
<dbReference type="InterPro" id="IPR036024">
    <property type="entry name" value="Somatomedin_B-like_dom_sf"/>
</dbReference>
<dbReference type="InterPro" id="IPR001212">
    <property type="entry name" value="Somatomedin_B_dom"/>
</dbReference>
<dbReference type="PANTHER" id="PTHR22917">
    <property type="entry name" value="HEMOPEXIN DOMAIN-CONTAINING PROTEIN"/>
    <property type="match status" value="1"/>
</dbReference>
<dbReference type="PANTHER" id="PTHR22917:SF3">
    <property type="entry name" value="VITRONECTIN"/>
    <property type="match status" value="1"/>
</dbReference>
<dbReference type="Pfam" id="PF00045">
    <property type="entry name" value="Hemopexin"/>
    <property type="match status" value="4"/>
</dbReference>
<dbReference type="Pfam" id="PF01033">
    <property type="entry name" value="Somatomedin_B"/>
    <property type="match status" value="1"/>
</dbReference>
<dbReference type="PRINTS" id="PR00022">
    <property type="entry name" value="SOMATOMEDINB"/>
</dbReference>
<dbReference type="SMART" id="SM00120">
    <property type="entry name" value="HX"/>
    <property type="match status" value="4"/>
</dbReference>
<dbReference type="SMART" id="SM00201">
    <property type="entry name" value="SO"/>
    <property type="match status" value="1"/>
</dbReference>
<dbReference type="SUPFAM" id="SSF50923">
    <property type="entry name" value="Hemopexin-like domain"/>
    <property type="match status" value="1"/>
</dbReference>
<dbReference type="SUPFAM" id="SSF90188">
    <property type="entry name" value="Somatomedin B domain"/>
    <property type="match status" value="1"/>
</dbReference>
<dbReference type="PROSITE" id="PS00024">
    <property type="entry name" value="HEMOPEXIN"/>
    <property type="match status" value="1"/>
</dbReference>
<dbReference type="PROSITE" id="PS51642">
    <property type="entry name" value="HEMOPEXIN_2"/>
    <property type="match status" value="4"/>
</dbReference>
<dbReference type="PROSITE" id="PS00524">
    <property type="entry name" value="SMB_1"/>
    <property type="match status" value="1"/>
</dbReference>
<dbReference type="PROSITE" id="PS50958">
    <property type="entry name" value="SMB_2"/>
    <property type="match status" value="1"/>
</dbReference>
<name>VTNC_PIG</name>
<evidence type="ECO:0000250" key="1"/>
<evidence type="ECO:0000250" key="2">
    <source>
        <dbReference type="UniProtKB" id="P04004"/>
    </source>
</evidence>
<evidence type="ECO:0000255" key="3"/>
<evidence type="ECO:0000255" key="4">
    <source>
        <dbReference type="PROSITE-ProRule" id="PRU00350"/>
    </source>
</evidence>
<evidence type="ECO:0000256" key="5">
    <source>
        <dbReference type="SAM" id="MobiDB-lite"/>
    </source>
</evidence>
<evidence type="ECO:0000269" key="6">
    <source>
    </source>
</evidence>
<evidence type="ECO:0000305" key="7"/>
<reference key="1">
    <citation type="journal article" date="1996" name="J. Biochem.">
        <title>Porcine vitronectin, the most compact form of single-chain vitronectin: the smallest molecular mass among vitronectins was ascribed to deletion and substitution of base pairs, and proteolytic trimming of the peptide.</title>
        <authorList>
            <person name="Yoneda A."/>
            <person name="Kojima K."/>
            <person name="Matsumoto I."/>
            <person name="Yamamoto K."/>
            <person name="Ogawa H."/>
        </authorList>
    </citation>
    <scope>NUCLEOTIDE SEQUENCE [MRNA]</scope>
</reference>
<reference key="2">
    <citation type="journal article" date="1992" name="Biochim. Biophys. Acta">
        <title>Vitronectin diversity in evolution but uniformity in ligand binding and size of the core polypeptide.</title>
        <authorList>
            <person name="Nakashima N."/>
            <person name="Miyazaki K."/>
            <person name="Ishikawa M."/>
            <person name="Yatohgo T."/>
            <person name="Ogawa H."/>
            <person name="Uchibori H."/>
            <person name="Matsumoto I."/>
            <person name="Seno N."/>
            <person name="Hayashi M."/>
        </authorList>
    </citation>
    <scope>PROTEIN SEQUENCE OF 20-44</scope>
</reference>